<feature type="chain" id="PRO_0000289939" description="Photosystem II reaction center protein T">
    <location>
        <begin position="1"/>
        <end position="35"/>
    </location>
</feature>
<feature type="transmembrane region" description="Helical" evidence="1">
    <location>
        <begin position="3"/>
        <end position="23"/>
    </location>
</feature>
<accession>P0C428</accession>
<comment type="function">
    <text evidence="1">Found at the monomer-monomer interface of the photosystem II (PS II) dimer, plays a role in assembly and dimerization of PSII. PSII is a light-driven water plastoquinone oxidoreductase, using light energy to abstract electrons from H(2)O, generating a proton gradient subsequently used for ATP formation.</text>
</comment>
<comment type="subunit">
    <text evidence="1">PSII is composed of 1 copy each of membrane proteins PsbA, PsbB, PsbC, PsbD, PsbE, PsbF, PsbH, PsbI, PsbJ, PsbK, PsbL, PsbM, PsbT, PsbY, PsbZ, Psb30/Ycf12, at least 3 peripheral proteins of the oxygen-evolving complex and a large number of cofactors. It forms dimeric complexes.</text>
</comment>
<comment type="subcellular location">
    <subcellularLocation>
        <location evidence="1">Plastid</location>
        <location evidence="1">Chloroplast thylakoid membrane</location>
        <topology evidence="1">Single-pass membrane protein</topology>
    </subcellularLocation>
</comment>
<comment type="similarity">
    <text evidence="1 2">Belongs to the PsbT family.</text>
</comment>
<dbReference type="EMBL" id="AY522329">
    <property type="status" value="NOT_ANNOTATED_CDS"/>
    <property type="molecule type" value="Genomic_DNA"/>
</dbReference>
<dbReference type="SMR" id="P0C428"/>
<dbReference type="STRING" id="39946.P0C428"/>
<dbReference type="Proteomes" id="UP000007015">
    <property type="component" value="Chloroplast"/>
</dbReference>
<dbReference type="GO" id="GO:0009535">
    <property type="term" value="C:chloroplast thylakoid membrane"/>
    <property type="evidence" value="ECO:0007669"/>
    <property type="project" value="UniProtKB-SubCell"/>
</dbReference>
<dbReference type="GO" id="GO:0009539">
    <property type="term" value="C:photosystem II reaction center"/>
    <property type="evidence" value="ECO:0007669"/>
    <property type="project" value="InterPro"/>
</dbReference>
<dbReference type="GO" id="GO:0009536">
    <property type="term" value="C:plastid"/>
    <property type="evidence" value="ECO:0000305"/>
    <property type="project" value="Gramene"/>
</dbReference>
<dbReference type="GO" id="GO:0015979">
    <property type="term" value="P:photosynthesis"/>
    <property type="evidence" value="ECO:0007669"/>
    <property type="project" value="UniProtKB-UniRule"/>
</dbReference>
<dbReference type="HAMAP" id="MF_00808">
    <property type="entry name" value="PSII_PsbT"/>
    <property type="match status" value="1"/>
</dbReference>
<dbReference type="InterPro" id="IPR001743">
    <property type="entry name" value="PSII_PsbT"/>
</dbReference>
<dbReference type="InterPro" id="IPR037268">
    <property type="entry name" value="PSII_PsbT_sf"/>
</dbReference>
<dbReference type="PANTHER" id="PTHR36411">
    <property type="match status" value="1"/>
</dbReference>
<dbReference type="PANTHER" id="PTHR36411:SF2">
    <property type="entry name" value="PHOTOSYSTEM II REACTION CENTER PROTEIN T"/>
    <property type="match status" value="1"/>
</dbReference>
<dbReference type="Pfam" id="PF01405">
    <property type="entry name" value="PsbT"/>
    <property type="match status" value="1"/>
</dbReference>
<dbReference type="SUPFAM" id="SSF161029">
    <property type="entry name" value="Photosystem II reaction center protein T, PsbT"/>
    <property type="match status" value="1"/>
</dbReference>
<name>PSBT_ORYSI</name>
<keyword id="KW-0150">Chloroplast</keyword>
<keyword id="KW-0472">Membrane</keyword>
<keyword id="KW-0602">Photosynthesis</keyword>
<keyword id="KW-0604">Photosystem II</keyword>
<keyword id="KW-0934">Plastid</keyword>
<keyword id="KW-1185">Reference proteome</keyword>
<keyword id="KW-0793">Thylakoid</keyword>
<keyword id="KW-0812">Transmembrane</keyword>
<keyword id="KW-1133">Transmembrane helix</keyword>
<geneLocation type="chloroplast"/>
<proteinExistence type="inferred from homology"/>
<sequence>MEALVYTFLLVSTLGIIFFAIFFREPPKVPTKKVK</sequence>
<gene>
    <name evidence="1" type="primary">psbT</name>
</gene>
<evidence type="ECO:0000255" key="1">
    <source>
        <dbReference type="HAMAP-Rule" id="MF_00808"/>
    </source>
</evidence>
<evidence type="ECO:0000305" key="2"/>
<reference key="1">
    <citation type="journal article" date="2004" name="Plant Physiol.">
        <title>A comparison of rice chloroplast genomes.</title>
        <authorList>
            <person name="Tang J."/>
            <person name="Xia H."/>
            <person name="Cao M."/>
            <person name="Zhang X."/>
            <person name="Zeng W."/>
            <person name="Hu S."/>
            <person name="Tong W."/>
            <person name="Wang J."/>
            <person name="Wang J."/>
            <person name="Yu J."/>
            <person name="Yang H."/>
            <person name="Zhu L."/>
        </authorList>
    </citation>
    <scope>NUCLEOTIDE SEQUENCE [LARGE SCALE GENOMIC DNA]</scope>
    <source>
        <strain>cv. 93-11</strain>
    </source>
</reference>
<protein>
    <recommendedName>
        <fullName evidence="1">Photosystem II reaction center protein T</fullName>
        <shortName evidence="1">PSII-T</shortName>
    </recommendedName>
</protein>
<organism>
    <name type="scientific">Oryza sativa subsp. indica</name>
    <name type="common">Rice</name>
    <dbReference type="NCBI Taxonomy" id="39946"/>
    <lineage>
        <taxon>Eukaryota</taxon>
        <taxon>Viridiplantae</taxon>
        <taxon>Streptophyta</taxon>
        <taxon>Embryophyta</taxon>
        <taxon>Tracheophyta</taxon>
        <taxon>Spermatophyta</taxon>
        <taxon>Magnoliopsida</taxon>
        <taxon>Liliopsida</taxon>
        <taxon>Poales</taxon>
        <taxon>Poaceae</taxon>
        <taxon>BOP clade</taxon>
        <taxon>Oryzoideae</taxon>
        <taxon>Oryzeae</taxon>
        <taxon>Oryzinae</taxon>
        <taxon>Oryza</taxon>
        <taxon>Oryza sativa</taxon>
    </lineage>
</organism>